<feature type="chain" id="PRO_0000258641" description="Large ribosomal subunit protein bL35">
    <location>
        <begin position="1"/>
        <end position="65"/>
    </location>
</feature>
<dbReference type="EMBL" id="CP000016">
    <property type="protein sequence ID" value="AAZ40989.1"/>
    <property type="molecule type" value="Genomic_DNA"/>
</dbReference>
<dbReference type="RefSeq" id="WP_011282898.1">
    <property type="nucleotide sequence ID" value="NC_007292.1"/>
</dbReference>
<dbReference type="SMR" id="Q492V3"/>
<dbReference type="STRING" id="291272.BPEN_364"/>
<dbReference type="KEGG" id="bpn:BPEN_364"/>
<dbReference type="eggNOG" id="COG0291">
    <property type="taxonomic scope" value="Bacteria"/>
</dbReference>
<dbReference type="HOGENOM" id="CLU_169643_1_1_6"/>
<dbReference type="OrthoDB" id="47476at2"/>
<dbReference type="Proteomes" id="UP000007794">
    <property type="component" value="Chromosome"/>
</dbReference>
<dbReference type="GO" id="GO:0022625">
    <property type="term" value="C:cytosolic large ribosomal subunit"/>
    <property type="evidence" value="ECO:0007669"/>
    <property type="project" value="TreeGrafter"/>
</dbReference>
<dbReference type="GO" id="GO:0003735">
    <property type="term" value="F:structural constituent of ribosome"/>
    <property type="evidence" value="ECO:0007669"/>
    <property type="project" value="InterPro"/>
</dbReference>
<dbReference type="GO" id="GO:0006412">
    <property type="term" value="P:translation"/>
    <property type="evidence" value="ECO:0007669"/>
    <property type="project" value="UniProtKB-UniRule"/>
</dbReference>
<dbReference type="FunFam" id="4.10.410.60:FF:000001">
    <property type="entry name" value="50S ribosomal protein L35"/>
    <property type="match status" value="1"/>
</dbReference>
<dbReference type="Gene3D" id="4.10.410.60">
    <property type="match status" value="1"/>
</dbReference>
<dbReference type="HAMAP" id="MF_00514">
    <property type="entry name" value="Ribosomal_bL35"/>
    <property type="match status" value="1"/>
</dbReference>
<dbReference type="InterPro" id="IPR001706">
    <property type="entry name" value="Ribosomal_bL35"/>
</dbReference>
<dbReference type="InterPro" id="IPR021137">
    <property type="entry name" value="Ribosomal_bL35-like"/>
</dbReference>
<dbReference type="InterPro" id="IPR018265">
    <property type="entry name" value="Ribosomal_bL35_CS"/>
</dbReference>
<dbReference type="InterPro" id="IPR037229">
    <property type="entry name" value="Ribosomal_bL35_sf"/>
</dbReference>
<dbReference type="NCBIfam" id="TIGR00001">
    <property type="entry name" value="rpmI_bact"/>
    <property type="match status" value="1"/>
</dbReference>
<dbReference type="PANTHER" id="PTHR33343">
    <property type="entry name" value="54S RIBOSOMAL PROTEIN BL35M"/>
    <property type="match status" value="1"/>
</dbReference>
<dbReference type="PANTHER" id="PTHR33343:SF1">
    <property type="entry name" value="LARGE RIBOSOMAL SUBUNIT PROTEIN BL35M"/>
    <property type="match status" value="1"/>
</dbReference>
<dbReference type="Pfam" id="PF01632">
    <property type="entry name" value="Ribosomal_L35p"/>
    <property type="match status" value="1"/>
</dbReference>
<dbReference type="PRINTS" id="PR00064">
    <property type="entry name" value="RIBOSOMALL35"/>
</dbReference>
<dbReference type="SUPFAM" id="SSF143034">
    <property type="entry name" value="L35p-like"/>
    <property type="match status" value="1"/>
</dbReference>
<dbReference type="PROSITE" id="PS00936">
    <property type="entry name" value="RIBOSOMAL_L35"/>
    <property type="match status" value="1"/>
</dbReference>
<name>RL35_BLOPB</name>
<evidence type="ECO:0000255" key="1">
    <source>
        <dbReference type="HAMAP-Rule" id="MF_00514"/>
    </source>
</evidence>
<evidence type="ECO:0000305" key="2"/>
<reference key="1">
    <citation type="journal article" date="2005" name="Genome Res.">
        <title>Genome sequence of Blochmannia pennsylvanicus indicates parallel evolutionary trends among bacterial mutualists of insects.</title>
        <authorList>
            <person name="Degnan P.H."/>
            <person name="Lazarus A.B."/>
            <person name="Wernegreen J.J."/>
        </authorList>
    </citation>
    <scope>NUCLEOTIDE SEQUENCE [LARGE SCALE GENOMIC DNA]</scope>
    <source>
        <strain>BPEN</strain>
    </source>
</reference>
<protein>
    <recommendedName>
        <fullName evidence="1">Large ribosomal subunit protein bL35</fullName>
    </recommendedName>
    <alternativeName>
        <fullName evidence="2">50S ribosomal protein L35</fullName>
    </alternativeName>
</protein>
<proteinExistence type="inferred from homology"/>
<organism>
    <name type="scientific">Blochmanniella pennsylvanica (strain BPEN)</name>
    <dbReference type="NCBI Taxonomy" id="291272"/>
    <lineage>
        <taxon>Bacteria</taxon>
        <taxon>Pseudomonadati</taxon>
        <taxon>Pseudomonadota</taxon>
        <taxon>Gammaproteobacteria</taxon>
        <taxon>Enterobacterales</taxon>
        <taxon>Enterobacteriaceae</taxon>
        <taxon>ant endosymbionts</taxon>
        <taxon>Candidatus Blochmanniella</taxon>
    </lineage>
</organism>
<comment type="similarity">
    <text evidence="1">Belongs to the bacterial ribosomal protein bL35 family.</text>
</comment>
<accession>Q492V3</accession>
<sequence>MPKIKTLQAASKRFKITALGKYKYKHANMRHILTKKSTKHKRHLRQKSILPKIYLTTIMKYLPYI</sequence>
<gene>
    <name evidence="1" type="primary">rpmI</name>
    <name type="ordered locus">BPEN_364</name>
</gene>
<keyword id="KW-1185">Reference proteome</keyword>
<keyword id="KW-0687">Ribonucleoprotein</keyword>
<keyword id="KW-0689">Ribosomal protein</keyword>